<accession>Q5PBM3</accession>
<organism>
    <name type="scientific">Anaplasma marginale (strain St. Maries)</name>
    <dbReference type="NCBI Taxonomy" id="234826"/>
    <lineage>
        <taxon>Bacteria</taxon>
        <taxon>Pseudomonadati</taxon>
        <taxon>Pseudomonadota</taxon>
        <taxon>Alphaproteobacteria</taxon>
        <taxon>Rickettsiales</taxon>
        <taxon>Anaplasmataceae</taxon>
        <taxon>Anaplasma</taxon>
    </lineage>
</organism>
<keyword id="KW-0274">FAD</keyword>
<keyword id="KW-0285">Flavoprotein</keyword>
<keyword id="KW-0489">Methyltransferase</keyword>
<keyword id="KW-0521">NADP</keyword>
<keyword id="KW-0545">Nucleotide biosynthesis</keyword>
<keyword id="KW-0808">Transferase</keyword>
<proteinExistence type="inferred from homology"/>
<gene>
    <name evidence="1" type="primary">thyX</name>
    <name type="ordered locus">AM170</name>
</gene>
<name>THYX_ANAMM</name>
<feature type="chain" id="PRO_0000175551" description="Flavin-dependent thymidylate synthase">
    <location>
        <begin position="1"/>
        <end position="291"/>
    </location>
</feature>
<feature type="domain" description="ThyX" evidence="2">
    <location>
        <begin position="31"/>
        <end position="241"/>
    </location>
</feature>
<feature type="short sequence motif" description="ThyX motif" evidence="1">
    <location>
        <begin position="100"/>
        <end position="110"/>
    </location>
</feature>
<feature type="active site" description="Involved in ionization of N3 of dUMP, leading to its activation" evidence="1">
    <location>
        <position position="207"/>
    </location>
</feature>
<feature type="binding site" evidence="1">
    <location>
        <position position="77"/>
    </location>
    <ligand>
        <name>FAD</name>
        <dbReference type="ChEBI" id="CHEBI:57692"/>
        <note>ligand shared between neighboring subunits</note>
    </ligand>
</feature>
<feature type="binding site" evidence="1">
    <location>
        <begin position="97"/>
        <end position="100"/>
    </location>
    <ligand>
        <name>dUMP</name>
        <dbReference type="ChEBI" id="CHEBI:246422"/>
        <note>ligand shared between dimeric partners</note>
    </ligand>
</feature>
<feature type="binding site" evidence="1">
    <location>
        <begin position="100"/>
        <end position="102"/>
    </location>
    <ligand>
        <name>FAD</name>
        <dbReference type="ChEBI" id="CHEBI:57692"/>
        <note>ligand shared between neighboring subunits</note>
    </ligand>
</feature>
<feature type="binding site" description="in other chain" evidence="1">
    <location>
        <begin position="108"/>
        <end position="112"/>
    </location>
    <ligand>
        <name>dUMP</name>
        <dbReference type="ChEBI" id="CHEBI:246422"/>
        <note>ligand shared between dimeric partners</note>
    </ligand>
</feature>
<feature type="binding site" evidence="1">
    <location>
        <position position="108"/>
    </location>
    <ligand>
        <name>FAD</name>
        <dbReference type="ChEBI" id="CHEBI:57692"/>
        <note>ligand shared between neighboring subunits</note>
    </ligand>
</feature>
<feature type="binding site" description="in other chain" evidence="1">
    <location>
        <position position="180"/>
    </location>
    <ligand>
        <name>dUMP</name>
        <dbReference type="ChEBI" id="CHEBI:246422"/>
        <note>ligand shared between dimeric partners</note>
    </ligand>
</feature>
<feature type="binding site" evidence="1">
    <location>
        <begin position="196"/>
        <end position="198"/>
    </location>
    <ligand>
        <name>FAD</name>
        <dbReference type="ChEBI" id="CHEBI:57692"/>
        <note>ligand shared between neighboring subunits</note>
    </ligand>
</feature>
<feature type="binding site" evidence="1">
    <location>
        <position position="207"/>
    </location>
    <ligand>
        <name>dUMP</name>
        <dbReference type="ChEBI" id="CHEBI:246422"/>
        <note>ligand shared between dimeric partners</note>
    </ligand>
</feature>
<reference key="1">
    <citation type="journal article" date="2005" name="Proc. Natl. Acad. Sci. U.S.A.">
        <title>Complete genome sequencing of Anaplasma marginale reveals that the surface is skewed to two superfamilies of outer membrane proteins.</title>
        <authorList>
            <person name="Brayton K.A."/>
            <person name="Kappmeyer L.S."/>
            <person name="Herndon D.R."/>
            <person name="Dark M.J."/>
            <person name="Tibbals D.L."/>
            <person name="Palmer G.H."/>
            <person name="McGuire T.C."/>
            <person name="Knowles D.P. Jr."/>
        </authorList>
    </citation>
    <scope>NUCLEOTIDE SEQUENCE [LARGE SCALE GENOMIC DNA]</scope>
    <source>
        <strain>St. Maries</strain>
    </source>
</reference>
<dbReference type="EC" id="2.1.1.148" evidence="1"/>
<dbReference type="EMBL" id="CP000030">
    <property type="protein sequence ID" value="AAV86306.1"/>
    <property type="molecule type" value="Genomic_DNA"/>
</dbReference>
<dbReference type="RefSeq" id="WP_010262847.1">
    <property type="nucleotide sequence ID" value="NZ_AFMU01000019.1"/>
</dbReference>
<dbReference type="SMR" id="Q5PBM3"/>
<dbReference type="GeneID" id="7398589"/>
<dbReference type="KEGG" id="ama:AM170"/>
<dbReference type="HOGENOM" id="CLU_067790_0_0_5"/>
<dbReference type="UniPathway" id="UPA00575"/>
<dbReference type="GO" id="GO:0050660">
    <property type="term" value="F:flavin adenine dinucleotide binding"/>
    <property type="evidence" value="ECO:0007669"/>
    <property type="project" value="InterPro"/>
</dbReference>
<dbReference type="GO" id="GO:0070402">
    <property type="term" value="F:NADPH binding"/>
    <property type="evidence" value="ECO:0007669"/>
    <property type="project" value="TreeGrafter"/>
</dbReference>
<dbReference type="GO" id="GO:0050797">
    <property type="term" value="F:thymidylate synthase (FAD) activity"/>
    <property type="evidence" value="ECO:0007669"/>
    <property type="project" value="UniProtKB-UniRule"/>
</dbReference>
<dbReference type="GO" id="GO:0004799">
    <property type="term" value="F:thymidylate synthase activity"/>
    <property type="evidence" value="ECO:0007669"/>
    <property type="project" value="TreeGrafter"/>
</dbReference>
<dbReference type="GO" id="GO:0006231">
    <property type="term" value="P:dTMP biosynthetic process"/>
    <property type="evidence" value="ECO:0007669"/>
    <property type="project" value="UniProtKB-UniRule"/>
</dbReference>
<dbReference type="GO" id="GO:0006235">
    <property type="term" value="P:dTTP biosynthetic process"/>
    <property type="evidence" value="ECO:0007669"/>
    <property type="project" value="UniProtKB-UniRule"/>
</dbReference>
<dbReference type="GO" id="GO:0032259">
    <property type="term" value="P:methylation"/>
    <property type="evidence" value="ECO:0007669"/>
    <property type="project" value="UniProtKB-KW"/>
</dbReference>
<dbReference type="CDD" id="cd20175">
    <property type="entry name" value="ThyX"/>
    <property type="match status" value="1"/>
</dbReference>
<dbReference type="Gene3D" id="3.30.1360.170">
    <property type="match status" value="1"/>
</dbReference>
<dbReference type="HAMAP" id="MF_01408">
    <property type="entry name" value="ThyX"/>
    <property type="match status" value="1"/>
</dbReference>
<dbReference type="InterPro" id="IPR003669">
    <property type="entry name" value="Thymidylate_synthase_ThyX"/>
</dbReference>
<dbReference type="InterPro" id="IPR036098">
    <property type="entry name" value="Thymidylate_synthase_ThyX_sf"/>
</dbReference>
<dbReference type="NCBIfam" id="TIGR02170">
    <property type="entry name" value="thyX"/>
    <property type="match status" value="1"/>
</dbReference>
<dbReference type="PANTHER" id="PTHR34934">
    <property type="entry name" value="FLAVIN-DEPENDENT THYMIDYLATE SYNTHASE"/>
    <property type="match status" value="1"/>
</dbReference>
<dbReference type="PANTHER" id="PTHR34934:SF1">
    <property type="entry name" value="FLAVIN-DEPENDENT THYMIDYLATE SYNTHASE"/>
    <property type="match status" value="1"/>
</dbReference>
<dbReference type="Pfam" id="PF02511">
    <property type="entry name" value="Thy1"/>
    <property type="match status" value="1"/>
</dbReference>
<dbReference type="SUPFAM" id="SSF69796">
    <property type="entry name" value="Thymidylate synthase-complementing protein Thy1"/>
    <property type="match status" value="1"/>
</dbReference>
<dbReference type="PROSITE" id="PS51331">
    <property type="entry name" value="THYX"/>
    <property type="match status" value="1"/>
</dbReference>
<evidence type="ECO:0000255" key="1">
    <source>
        <dbReference type="HAMAP-Rule" id="MF_01408"/>
    </source>
</evidence>
<evidence type="ECO:0000255" key="2">
    <source>
        <dbReference type="PROSITE-ProRule" id="PRU00661"/>
    </source>
</evidence>
<sequence length="291" mass="33620">MEEGTGEYTKRVVVHALEDILHQELRVLDKGFVRVVDYMGSDESVVQAARVSYGRGTKRTSQDAALIGYLMRHAHTSPFEMCEIKLHVKLPIFVARQWVRHRTASINEYSARYSVLDREFYIPDEKQIAEQSTNNAQGRGTPLPADAAKRIMELFRRNSELMYEDYEALLEQGLARELARMNLTINCYTQWYWKVNLHNLLRFLALRSGAGAQYEIREYASRILEIVRLWVPMVHAAFVEYHLESSTISRSALVVVRKMLQGEKVSMEESGLGRREWGELMSVLYPDGEPE</sequence>
<protein>
    <recommendedName>
        <fullName evidence="1">Flavin-dependent thymidylate synthase</fullName>
        <shortName evidence="1">FDTS</shortName>
        <ecNumber evidence="1">2.1.1.148</ecNumber>
    </recommendedName>
    <alternativeName>
        <fullName evidence="1">FAD-dependent thymidylate synthase</fullName>
    </alternativeName>
    <alternativeName>
        <fullName evidence="1">Thymidylate synthase ThyX</fullName>
        <shortName evidence="1">TS</shortName>
        <shortName evidence="1">TSase</shortName>
    </alternativeName>
</protein>
<comment type="function">
    <text evidence="1">Catalyzes the reductive methylation of 2'-deoxyuridine-5'-monophosphate (dUMP) to 2'-deoxythymidine-5'-monophosphate (dTMP) while utilizing 5,10-methylenetetrahydrofolate (mTHF) as the methyl donor, and NADPH and FADH(2) as the reductant.</text>
</comment>
<comment type="catalytic activity">
    <reaction evidence="1">
        <text>dUMP + (6R)-5,10-methylene-5,6,7,8-tetrahydrofolate + NADPH + H(+) = dTMP + (6S)-5,6,7,8-tetrahydrofolate + NADP(+)</text>
        <dbReference type="Rhea" id="RHEA:29043"/>
        <dbReference type="ChEBI" id="CHEBI:15378"/>
        <dbReference type="ChEBI" id="CHEBI:15636"/>
        <dbReference type="ChEBI" id="CHEBI:57453"/>
        <dbReference type="ChEBI" id="CHEBI:57783"/>
        <dbReference type="ChEBI" id="CHEBI:58349"/>
        <dbReference type="ChEBI" id="CHEBI:63528"/>
        <dbReference type="ChEBI" id="CHEBI:246422"/>
        <dbReference type="EC" id="2.1.1.148"/>
    </reaction>
</comment>
<comment type="cofactor">
    <cofactor evidence="1">
        <name>FAD</name>
        <dbReference type="ChEBI" id="CHEBI:57692"/>
    </cofactor>
    <text evidence="1">Binds 4 FAD per tetramer. Each FAD binding site is formed by three monomers.</text>
</comment>
<comment type="pathway">
    <text evidence="1">Pyrimidine metabolism; dTTP biosynthesis.</text>
</comment>
<comment type="subunit">
    <text evidence="1">Homotetramer.</text>
</comment>
<comment type="similarity">
    <text evidence="1">Belongs to the thymidylate synthase ThyX family.</text>
</comment>